<name>Y520_BACC7</name>
<evidence type="ECO:0000255" key="1">
    <source>
        <dbReference type="HAMAP-Rule" id="MF_00829"/>
    </source>
</evidence>
<organism>
    <name type="scientific">Bacillus cereus (strain AH187)</name>
    <dbReference type="NCBI Taxonomy" id="405534"/>
    <lineage>
        <taxon>Bacteria</taxon>
        <taxon>Bacillati</taxon>
        <taxon>Bacillota</taxon>
        <taxon>Bacilli</taxon>
        <taxon>Bacillales</taxon>
        <taxon>Bacillaceae</taxon>
        <taxon>Bacillus</taxon>
        <taxon>Bacillus cereus group</taxon>
    </lineage>
</organism>
<feature type="chain" id="PRO_1000200907" description="UPF0435 protein BCAH187_A0520">
    <location>
        <begin position="1"/>
        <end position="74"/>
    </location>
</feature>
<proteinExistence type="inferred from homology"/>
<accession>B7HTZ9</accession>
<dbReference type="EMBL" id="CP001177">
    <property type="protein sequence ID" value="ACJ79367.1"/>
    <property type="molecule type" value="Genomic_DNA"/>
</dbReference>
<dbReference type="SMR" id="B7HTZ9"/>
<dbReference type="KEGG" id="bcr:BCAH187_A0520"/>
<dbReference type="HOGENOM" id="CLU_199533_1_0_9"/>
<dbReference type="Proteomes" id="UP000002214">
    <property type="component" value="Chromosome"/>
</dbReference>
<dbReference type="HAMAP" id="MF_00829">
    <property type="entry name" value="UPF0435"/>
    <property type="match status" value="1"/>
</dbReference>
<dbReference type="InterPro" id="IPR009507">
    <property type="entry name" value="UPF0435"/>
</dbReference>
<dbReference type="Pfam" id="PF06569">
    <property type="entry name" value="DUF1128"/>
    <property type="match status" value="1"/>
</dbReference>
<comment type="similarity">
    <text evidence="1">Belongs to the UPF0435 family.</text>
</comment>
<protein>
    <recommendedName>
        <fullName evidence="1">UPF0435 protein BCAH187_A0520</fullName>
    </recommendedName>
</protein>
<reference key="1">
    <citation type="submission" date="2008-10" db="EMBL/GenBank/DDBJ databases">
        <title>Genome sequence of Bacillus cereus AH187.</title>
        <authorList>
            <person name="Dodson R.J."/>
            <person name="Durkin A.S."/>
            <person name="Rosovitz M.J."/>
            <person name="Rasko D.A."/>
            <person name="Kolsto A.B."/>
            <person name="Okstad O.A."/>
            <person name="Ravel J."/>
            <person name="Sutton G."/>
        </authorList>
    </citation>
    <scope>NUCLEOTIDE SEQUENCE [LARGE SCALE GENOMIC DNA]</scope>
    <source>
        <strain>AH187</strain>
    </source>
</reference>
<gene>
    <name type="ordered locus">BCAH187_A0520</name>
</gene>
<sequence length="74" mass="8652">MDLSVKSEENVEYMVEAIKEKLRMVNAGAMRAASFNEEMYEDLRDIYEHVMKRETFSISEMQAITEELGTLIKK</sequence>